<sequence length="291" mass="30931">MSTKIDGKQIAAEIKTNLAERVNKLKAQGIQPGLGTLLVGEDPGSMKYVAGKHADCQEVGITSVKKELPADASFDDIAAAVRELNEDPACTGFIVQLPLPKGINENAIIDMIDPAKDADGMHPYNLGELVLHVRGDISTPLPCTPRGVLELLDAYDIDLNGKEVCVLGRGITIGRTIGLMLTRNAVNATVTLCHTGTRDVADHMRRADVIVAAMGSAGFVTPDKIKDGAVLVDVGVSRVYDEEAGRYRIKGDVDKACYDKASAYTPNPGGVGPMTRAMLLANVVEMAERHA</sequence>
<gene>
    <name evidence="1" type="primary">folD</name>
    <name type="ordered locus">BLD_0746</name>
</gene>
<reference key="1">
    <citation type="journal article" date="2008" name="BMC Genomics">
        <title>Comparative genomic analysis of the gut bacterium Bifidobacterium longum reveals loci susceptible to deletion during pure culture growth.</title>
        <authorList>
            <person name="Lee J.H."/>
            <person name="Karamychev V.N."/>
            <person name="Kozyavkin S.A."/>
            <person name="Mills D."/>
            <person name="Pavlov A.R."/>
            <person name="Pavlova N.V."/>
            <person name="Polouchine N.N."/>
            <person name="Richardson P.M."/>
            <person name="Shakhova V.V."/>
            <person name="Slesarev A.I."/>
            <person name="Weimer B."/>
            <person name="O'Sullivan D.J."/>
        </authorList>
    </citation>
    <scope>NUCLEOTIDE SEQUENCE [LARGE SCALE GENOMIC DNA]</scope>
    <source>
        <strain>DJO10A</strain>
    </source>
</reference>
<dbReference type="EC" id="1.5.1.5" evidence="1"/>
<dbReference type="EC" id="3.5.4.9" evidence="1"/>
<dbReference type="EMBL" id="CP000605">
    <property type="protein sequence ID" value="ACD98192.1"/>
    <property type="molecule type" value="Genomic_DNA"/>
</dbReference>
<dbReference type="RefSeq" id="WP_007053562.1">
    <property type="nucleotide sequence ID" value="NZ_AABM02000035.1"/>
</dbReference>
<dbReference type="SMR" id="B3DSS3"/>
<dbReference type="KEGG" id="blj:BLD_0746"/>
<dbReference type="HOGENOM" id="CLU_034045_3_0_11"/>
<dbReference type="UniPathway" id="UPA00193"/>
<dbReference type="Proteomes" id="UP000002419">
    <property type="component" value="Chromosome"/>
</dbReference>
<dbReference type="GO" id="GO:0005829">
    <property type="term" value="C:cytosol"/>
    <property type="evidence" value="ECO:0007669"/>
    <property type="project" value="TreeGrafter"/>
</dbReference>
<dbReference type="GO" id="GO:0004477">
    <property type="term" value="F:methenyltetrahydrofolate cyclohydrolase activity"/>
    <property type="evidence" value="ECO:0007669"/>
    <property type="project" value="UniProtKB-UniRule"/>
</dbReference>
<dbReference type="GO" id="GO:0004488">
    <property type="term" value="F:methylenetetrahydrofolate dehydrogenase (NADP+) activity"/>
    <property type="evidence" value="ECO:0007669"/>
    <property type="project" value="UniProtKB-UniRule"/>
</dbReference>
<dbReference type="GO" id="GO:0000105">
    <property type="term" value="P:L-histidine biosynthetic process"/>
    <property type="evidence" value="ECO:0007669"/>
    <property type="project" value="UniProtKB-KW"/>
</dbReference>
<dbReference type="GO" id="GO:0009086">
    <property type="term" value="P:methionine biosynthetic process"/>
    <property type="evidence" value="ECO:0007669"/>
    <property type="project" value="UniProtKB-KW"/>
</dbReference>
<dbReference type="GO" id="GO:0006164">
    <property type="term" value="P:purine nucleotide biosynthetic process"/>
    <property type="evidence" value="ECO:0007669"/>
    <property type="project" value="UniProtKB-KW"/>
</dbReference>
<dbReference type="GO" id="GO:0035999">
    <property type="term" value="P:tetrahydrofolate interconversion"/>
    <property type="evidence" value="ECO:0007669"/>
    <property type="project" value="UniProtKB-UniRule"/>
</dbReference>
<dbReference type="CDD" id="cd01080">
    <property type="entry name" value="NAD_bind_m-THF_DH_Cyclohyd"/>
    <property type="match status" value="1"/>
</dbReference>
<dbReference type="FunFam" id="3.40.50.10860:FF:000005">
    <property type="entry name" value="C-1-tetrahydrofolate synthase, cytoplasmic, putative"/>
    <property type="match status" value="1"/>
</dbReference>
<dbReference type="Gene3D" id="3.40.50.10860">
    <property type="entry name" value="Leucine Dehydrogenase, chain A, domain 1"/>
    <property type="match status" value="1"/>
</dbReference>
<dbReference type="Gene3D" id="3.40.50.720">
    <property type="entry name" value="NAD(P)-binding Rossmann-like Domain"/>
    <property type="match status" value="1"/>
</dbReference>
<dbReference type="HAMAP" id="MF_01576">
    <property type="entry name" value="THF_DHG_CYH"/>
    <property type="match status" value="1"/>
</dbReference>
<dbReference type="InterPro" id="IPR046346">
    <property type="entry name" value="Aminoacid_DH-like_N_sf"/>
</dbReference>
<dbReference type="InterPro" id="IPR036291">
    <property type="entry name" value="NAD(P)-bd_dom_sf"/>
</dbReference>
<dbReference type="InterPro" id="IPR000672">
    <property type="entry name" value="THF_DH/CycHdrlase"/>
</dbReference>
<dbReference type="InterPro" id="IPR020630">
    <property type="entry name" value="THF_DH/CycHdrlase_cat_dom"/>
</dbReference>
<dbReference type="InterPro" id="IPR020631">
    <property type="entry name" value="THF_DH/CycHdrlase_NAD-bd_dom"/>
</dbReference>
<dbReference type="NCBIfam" id="NF010789">
    <property type="entry name" value="PRK14193.1"/>
    <property type="match status" value="1"/>
</dbReference>
<dbReference type="PANTHER" id="PTHR48099:SF5">
    <property type="entry name" value="C-1-TETRAHYDROFOLATE SYNTHASE, CYTOPLASMIC"/>
    <property type="match status" value="1"/>
</dbReference>
<dbReference type="PANTHER" id="PTHR48099">
    <property type="entry name" value="C-1-TETRAHYDROFOLATE SYNTHASE, CYTOPLASMIC-RELATED"/>
    <property type="match status" value="1"/>
</dbReference>
<dbReference type="Pfam" id="PF00763">
    <property type="entry name" value="THF_DHG_CYH"/>
    <property type="match status" value="1"/>
</dbReference>
<dbReference type="Pfam" id="PF02882">
    <property type="entry name" value="THF_DHG_CYH_C"/>
    <property type="match status" value="1"/>
</dbReference>
<dbReference type="PRINTS" id="PR00085">
    <property type="entry name" value="THFDHDRGNASE"/>
</dbReference>
<dbReference type="SUPFAM" id="SSF53223">
    <property type="entry name" value="Aminoacid dehydrogenase-like, N-terminal domain"/>
    <property type="match status" value="1"/>
</dbReference>
<dbReference type="SUPFAM" id="SSF51735">
    <property type="entry name" value="NAD(P)-binding Rossmann-fold domains"/>
    <property type="match status" value="1"/>
</dbReference>
<comment type="function">
    <text evidence="1">Catalyzes the oxidation of 5,10-methylenetetrahydrofolate to 5,10-methenyltetrahydrofolate and then the hydrolysis of 5,10-methenyltetrahydrofolate to 10-formyltetrahydrofolate.</text>
</comment>
<comment type="catalytic activity">
    <reaction evidence="1">
        <text>(6R)-5,10-methylene-5,6,7,8-tetrahydrofolate + NADP(+) = (6R)-5,10-methenyltetrahydrofolate + NADPH</text>
        <dbReference type="Rhea" id="RHEA:22812"/>
        <dbReference type="ChEBI" id="CHEBI:15636"/>
        <dbReference type="ChEBI" id="CHEBI:57455"/>
        <dbReference type="ChEBI" id="CHEBI:57783"/>
        <dbReference type="ChEBI" id="CHEBI:58349"/>
        <dbReference type="EC" id="1.5.1.5"/>
    </reaction>
</comment>
<comment type="catalytic activity">
    <reaction evidence="1">
        <text>(6R)-5,10-methenyltetrahydrofolate + H2O = (6R)-10-formyltetrahydrofolate + H(+)</text>
        <dbReference type="Rhea" id="RHEA:23700"/>
        <dbReference type="ChEBI" id="CHEBI:15377"/>
        <dbReference type="ChEBI" id="CHEBI:15378"/>
        <dbReference type="ChEBI" id="CHEBI:57455"/>
        <dbReference type="ChEBI" id="CHEBI:195366"/>
        <dbReference type="EC" id="3.5.4.9"/>
    </reaction>
</comment>
<comment type="pathway">
    <text evidence="1">One-carbon metabolism; tetrahydrofolate interconversion.</text>
</comment>
<comment type="subunit">
    <text evidence="1">Homodimer.</text>
</comment>
<comment type="similarity">
    <text evidence="1">Belongs to the tetrahydrofolate dehydrogenase/cyclohydrolase family.</text>
</comment>
<feature type="chain" id="PRO_1000147443" description="Bifunctional protein FolD">
    <location>
        <begin position="1"/>
        <end position="291"/>
    </location>
</feature>
<feature type="binding site" evidence="1">
    <location>
        <begin position="168"/>
        <end position="170"/>
    </location>
    <ligand>
        <name>NADP(+)</name>
        <dbReference type="ChEBI" id="CHEBI:58349"/>
    </ligand>
</feature>
<feature type="binding site" evidence="1">
    <location>
        <position position="195"/>
    </location>
    <ligand>
        <name>NADP(+)</name>
        <dbReference type="ChEBI" id="CHEBI:58349"/>
    </ligand>
</feature>
<feature type="binding site" evidence="1">
    <location>
        <position position="236"/>
    </location>
    <ligand>
        <name>NADP(+)</name>
        <dbReference type="ChEBI" id="CHEBI:58349"/>
    </ligand>
</feature>
<name>FOLD_BIFLD</name>
<evidence type="ECO:0000255" key="1">
    <source>
        <dbReference type="HAMAP-Rule" id="MF_01576"/>
    </source>
</evidence>
<organism>
    <name type="scientific">Bifidobacterium longum (strain DJO10A)</name>
    <dbReference type="NCBI Taxonomy" id="205913"/>
    <lineage>
        <taxon>Bacteria</taxon>
        <taxon>Bacillati</taxon>
        <taxon>Actinomycetota</taxon>
        <taxon>Actinomycetes</taxon>
        <taxon>Bifidobacteriales</taxon>
        <taxon>Bifidobacteriaceae</taxon>
        <taxon>Bifidobacterium</taxon>
    </lineage>
</organism>
<proteinExistence type="inferred from homology"/>
<protein>
    <recommendedName>
        <fullName evidence="1">Bifunctional protein FolD</fullName>
    </recommendedName>
    <domain>
        <recommendedName>
            <fullName evidence="1">Methylenetetrahydrofolate dehydrogenase</fullName>
            <ecNumber evidence="1">1.5.1.5</ecNumber>
        </recommendedName>
    </domain>
    <domain>
        <recommendedName>
            <fullName evidence="1">Methenyltetrahydrofolate cyclohydrolase</fullName>
            <ecNumber evidence="1">3.5.4.9</ecNumber>
        </recommendedName>
    </domain>
</protein>
<keyword id="KW-0028">Amino-acid biosynthesis</keyword>
<keyword id="KW-0368">Histidine biosynthesis</keyword>
<keyword id="KW-0378">Hydrolase</keyword>
<keyword id="KW-0486">Methionine biosynthesis</keyword>
<keyword id="KW-0511">Multifunctional enzyme</keyword>
<keyword id="KW-0521">NADP</keyword>
<keyword id="KW-0554">One-carbon metabolism</keyword>
<keyword id="KW-0560">Oxidoreductase</keyword>
<keyword id="KW-0658">Purine biosynthesis</keyword>
<accession>B3DSS3</accession>